<accession>P46739</accession>
<proteinExistence type="evidence at protein level"/>
<sequence length="184" mass="19477">MKAKKYENQIYNENGRRCQRHGRRLAIADANGLNTVNAGDGKNLGTATATITTLQSCSVDLNLVTPNATVNRAGMLANREITKFSVGSKDCPSDTYAVWFKEIDGEGQGVAQGTTVTNKFYLKMTSADGTASVGDINIGTKSGKGLSGQLVGGKFDGKITVAYDSATAPADVYTYDLMAAVYVQ</sequence>
<organism>
    <name type="scientific">Escherichia coli</name>
    <dbReference type="NCBI Taxonomy" id="562"/>
    <lineage>
        <taxon>Bacteria</taxon>
        <taxon>Pseudomonadati</taxon>
        <taxon>Pseudomonadota</taxon>
        <taxon>Gammaproteobacteria</taxon>
        <taxon>Enterobacterales</taxon>
        <taxon>Enterobacteriaceae</taxon>
        <taxon>Escherichia</taxon>
    </lineage>
</organism>
<protein>
    <recommendedName>
        <fullName>Non-fimbrial adhesin 1</fullName>
    </recommendedName>
    <alternativeName>
        <fullName>Non-fimbrial adhesin I</fullName>
    </alternativeName>
</protein>
<reference key="1">
    <citation type="journal article" date="1993" name="Infect. Immun.">
        <title>Genetic analysis of the gene cluster encoding nonfimbrial adhesin I from an Escherichia coli uropathogen.</title>
        <authorList>
            <person name="Ahrens R."/>
            <person name="Ott M."/>
            <person name="Ritter A."/>
            <person name="Hoschuetzky H."/>
            <person name="Buehler T."/>
            <person name="Lottspeich F."/>
            <person name="Boulnois G.J."/>
            <person name="Jann K."/>
            <person name="Hacker J."/>
        </authorList>
    </citation>
    <scope>NUCLEOTIDE SEQUENCE [GENOMIC DNA]</scope>
    <scope>PROTEIN SEQUENCE OF 29-49; 81-88 AND 103-125</scope>
    <source>
        <strain>O83:K1:H4 / 827 / UPEC</strain>
    </source>
</reference>
<evidence type="ECO:0000269" key="1">
    <source>
    </source>
</evidence>
<evidence type="ECO:0000305" key="2"/>
<name>NFAA_ECOLX</name>
<gene>
    <name type="primary">nfaA</name>
</gene>
<dbReference type="EMBL" id="AH004279">
    <property type="protein sequence ID" value="AAB26856.2"/>
    <property type="molecule type" value="Genomic_DNA"/>
</dbReference>
<keyword id="KW-0903">Direct protein sequencing</keyword>
<keyword id="KW-1015">Disulfide bond</keyword>
<keyword id="KW-0732">Signal</keyword>
<comment type="subunit">
    <text>Forms a polymeric structure, which disintegrates with elevated temperature into a monomer but with some relatively stable dimers.</text>
</comment>
<feature type="signal peptide" evidence="1">
    <location>
        <begin position="1"/>
        <end position="28"/>
    </location>
</feature>
<feature type="chain" id="PRO_0000009238" description="Non-fimbrial adhesin 1">
    <location>
        <begin position="29"/>
        <end position="184"/>
    </location>
</feature>
<feature type="disulfide bond" evidence="2">
    <location>
        <begin position="57"/>
        <end position="91"/>
    </location>
</feature>